<sequence>MNKESKDDDMSLGKFSFSHFLYYLVLIVVIVYGLYKLFTGHGSDINFGKFLLRTSPYMWANLGIALCVGLSVVGAAWGIFITGSSMIGAGVRAPRITTKNLISIIFCEVVAIYGLIIAIVFSSKLTVATAENMYSKSNLYTGYSLFWAGITVGASNLICGIAVGITGATAAISDAADSALFVKILVIEIFGSILGLLGLIVGLLMAGKASEFQ</sequence>
<evidence type="ECO:0000255" key="1"/>
<evidence type="ECO:0000269" key="2">
    <source>
    </source>
</evidence>
<evidence type="ECO:0000269" key="3">
    <source>
    </source>
</evidence>
<evidence type="ECO:0000269" key="4">
    <source>
    </source>
</evidence>
<evidence type="ECO:0000305" key="5"/>
<evidence type="ECO:0007744" key="6">
    <source>
        <dbReference type="PDB" id="5TJ5"/>
    </source>
</evidence>
<evidence type="ECO:0007744" key="7">
    <source>
        <dbReference type="PDB" id="6C6L"/>
    </source>
</evidence>
<evidence type="ECO:0007829" key="8">
    <source>
        <dbReference type="PDB" id="6M0R"/>
    </source>
</evidence>
<evidence type="ECO:0007829" key="9">
    <source>
        <dbReference type="PDB" id="8EAS"/>
    </source>
</evidence>
<gene>
    <name type="primary">VMA16</name>
    <name type="synonym">PPA1</name>
    <name type="ordered locus">YHR026W</name>
</gene>
<keyword id="KW-0002">3D-structure</keyword>
<keyword id="KW-0375">Hydrogen ion transport</keyword>
<keyword id="KW-0406">Ion transport</keyword>
<keyword id="KW-0472">Membrane</keyword>
<keyword id="KW-1185">Reference proteome</keyword>
<keyword id="KW-0812">Transmembrane</keyword>
<keyword id="KW-1133">Transmembrane helix</keyword>
<keyword id="KW-0813">Transport</keyword>
<keyword id="KW-0926">Vacuole</keyword>
<dbReference type="EMBL" id="M35294">
    <property type="protein sequence ID" value="AAA34892.1"/>
    <property type="molecule type" value="Genomic_DNA"/>
</dbReference>
<dbReference type="EMBL" id="U10399">
    <property type="protein sequence ID" value="AAB68881.1"/>
    <property type="molecule type" value="Genomic_DNA"/>
</dbReference>
<dbReference type="EMBL" id="AY692797">
    <property type="protein sequence ID" value="AAT92816.1"/>
    <property type="molecule type" value="Genomic_DNA"/>
</dbReference>
<dbReference type="EMBL" id="BK006934">
    <property type="protein sequence ID" value="DAA06717.1"/>
    <property type="molecule type" value="Genomic_DNA"/>
</dbReference>
<dbReference type="PIR" id="A34633">
    <property type="entry name" value="A34633"/>
</dbReference>
<dbReference type="RefSeq" id="NP_011891.1">
    <property type="nucleotide sequence ID" value="NM_001179156.1"/>
</dbReference>
<dbReference type="PDB" id="5TJ5">
    <property type="method" value="EM"/>
    <property type="resolution" value="3.90 A"/>
    <property type="chains" value="B=1-213"/>
</dbReference>
<dbReference type="PDB" id="5VOX">
    <property type="method" value="EM"/>
    <property type="resolution" value="6.80 A"/>
    <property type="chains" value="R=1-213"/>
</dbReference>
<dbReference type="PDB" id="5VOY">
    <property type="method" value="EM"/>
    <property type="resolution" value="7.90 A"/>
    <property type="chains" value="R=1-213"/>
</dbReference>
<dbReference type="PDB" id="5VOZ">
    <property type="method" value="EM"/>
    <property type="resolution" value="7.60 A"/>
    <property type="chains" value="R=1-213"/>
</dbReference>
<dbReference type="PDB" id="6C6L">
    <property type="method" value="EM"/>
    <property type="resolution" value="3.50 A"/>
    <property type="chains" value="C=1-213"/>
</dbReference>
<dbReference type="PDB" id="6M0R">
    <property type="method" value="EM"/>
    <property type="resolution" value="2.70 A"/>
    <property type="chains" value="C=16-213"/>
</dbReference>
<dbReference type="PDB" id="6M0S">
    <property type="method" value="EM"/>
    <property type="resolution" value="3.60 A"/>
    <property type="chains" value="C=16-213"/>
</dbReference>
<dbReference type="PDB" id="6O7T">
    <property type="method" value="EM"/>
    <property type="resolution" value="3.20 A"/>
    <property type="chains" value="c=1-213"/>
</dbReference>
<dbReference type="PDB" id="6O7U">
    <property type="method" value="EM"/>
    <property type="resolution" value="3.10 A"/>
    <property type="chains" value="c=1-213"/>
</dbReference>
<dbReference type="PDB" id="6O7V">
    <property type="method" value="EM"/>
    <property type="resolution" value="6.60 A"/>
    <property type="chains" value="c=1-213"/>
</dbReference>
<dbReference type="PDB" id="6O7W">
    <property type="method" value="EM"/>
    <property type="resolution" value="7.00 A"/>
    <property type="chains" value="c=1-213"/>
</dbReference>
<dbReference type="PDB" id="6O7X">
    <property type="method" value="EM"/>
    <property type="resolution" value="8.70 A"/>
    <property type="chains" value="c=1-213"/>
</dbReference>
<dbReference type="PDB" id="6PE4">
    <property type="method" value="EM"/>
    <property type="resolution" value="3.10 A"/>
    <property type="chains" value="G=1-213"/>
</dbReference>
<dbReference type="PDB" id="6PE5">
    <property type="method" value="EM"/>
    <property type="resolution" value="3.20 A"/>
    <property type="chains" value="G=1-213"/>
</dbReference>
<dbReference type="PDB" id="7FDA">
    <property type="method" value="EM"/>
    <property type="resolution" value="4.20 A"/>
    <property type="chains" value="T=1-213"/>
</dbReference>
<dbReference type="PDB" id="7FDB">
    <property type="method" value="EM"/>
    <property type="resolution" value="4.80 A"/>
    <property type="chains" value="T=1-213"/>
</dbReference>
<dbReference type="PDB" id="7FDC">
    <property type="method" value="EM"/>
    <property type="resolution" value="6.60 A"/>
    <property type="chains" value="T=1-213"/>
</dbReference>
<dbReference type="PDB" id="7TAO">
    <property type="method" value="EM"/>
    <property type="resolution" value="3.20 A"/>
    <property type="chains" value="C=1-213"/>
</dbReference>
<dbReference type="PDB" id="7TAP">
    <property type="method" value="EM"/>
    <property type="resolution" value="2.80 A"/>
    <property type="chains" value="C=1-213"/>
</dbReference>
<dbReference type="PDB" id="7TMR">
    <property type="method" value="EM"/>
    <property type="resolution" value="3.50 A"/>
    <property type="chains" value="c=1-213"/>
</dbReference>
<dbReference type="PDB" id="7TMS">
    <property type="method" value="EM"/>
    <property type="resolution" value="3.80 A"/>
    <property type="chains" value="c=1-213"/>
</dbReference>
<dbReference type="PDB" id="7TMT">
    <property type="method" value="EM"/>
    <property type="resolution" value="3.80 A"/>
    <property type="chains" value="c=1-213"/>
</dbReference>
<dbReference type="PDB" id="8EAS">
    <property type="method" value="EM"/>
    <property type="resolution" value="2.60 A"/>
    <property type="chains" value="c=1-213"/>
</dbReference>
<dbReference type="PDB" id="8EAT">
    <property type="method" value="EM"/>
    <property type="resolution" value="3.10 A"/>
    <property type="chains" value="c=1-213"/>
</dbReference>
<dbReference type="PDB" id="8EAU">
    <property type="method" value="EM"/>
    <property type="resolution" value="3.10 A"/>
    <property type="chains" value="c=1-213"/>
</dbReference>
<dbReference type="PDB" id="9E76">
    <property type="method" value="EM"/>
    <property type="resolution" value="3.40 A"/>
    <property type="chains" value="C=1-213"/>
</dbReference>
<dbReference type="PDB" id="9E7L">
    <property type="method" value="EM"/>
    <property type="resolution" value="3.33 A"/>
    <property type="chains" value="C=1-213"/>
</dbReference>
<dbReference type="PDB" id="9MJ4">
    <property type="method" value="EM"/>
    <property type="resolution" value="3.70 A"/>
    <property type="chains" value="C=1-213"/>
</dbReference>
<dbReference type="PDBsum" id="5TJ5"/>
<dbReference type="PDBsum" id="5VOX"/>
<dbReference type="PDBsum" id="5VOY"/>
<dbReference type="PDBsum" id="5VOZ"/>
<dbReference type="PDBsum" id="6C6L"/>
<dbReference type="PDBsum" id="6M0R"/>
<dbReference type="PDBsum" id="6M0S"/>
<dbReference type="PDBsum" id="6O7T"/>
<dbReference type="PDBsum" id="6O7U"/>
<dbReference type="PDBsum" id="6O7V"/>
<dbReference type="PDBsum" id="6O7W"/>
<dbReference type="PDBsum" id="6O7X"/>
<dbReference type="PDBsum" id="6PE4"/>
<dbReference type="PDBsum" id="6PE5"/>
<dbReference type="PDBsum" id="7FDA"/>
<dbReference type="PDBsum" id="7FDB"/>
<dbReference type="PDBsum" id="7FDC"/>
<dbReference type="PDBsum" id="7TAO"/>
<dbReference type="PDBsum" id="7TAP"/>
<dbReference type="PDBsum" id="7TMR"/>
<dbReference type="PDBsum" id="7TMS"/>
<dbReference type="PDBsum" id="7TMT"/>
<dbReference type="PDBsum" id="8EAS"/>
<dbReference type="PDBsum" id="8EAT"/>
<dbReference type="PDBsum" id="8EAU"/>
<dbReference type="PDBsum" id="9E76"/>
<dbReference type="PDBsum" id="9E7L"/>
<dbReference type="PDBsum" id="9MJ4"/>
<dbReference type="EMDB" id="EMD-0644"/>
<dbReference type="EMDB" id="EMD-0645"/>
<dbReference type="EMDB" id="EMD-0646"/>
<dbReference type="EMDB" id="EMD-0647"/>
<dbReference type="EMDB" id="EMD-0648"/>
<dbReference type="EMDB" id="EMD-20322"/>
<dbReference type="EMDB" id="EMD-20323"/>
<dbReference type="EMDB" id="EMD-25779"/>
<dbReference type="EMDB" id="EMD-25780"/>
<dbReference type="EMDB" id="EMD-26000"/>
<dbReference type="EMDB" id="EMD-26001"/>
<dbReference type="EMDB" id="EMD-26002"/>
<dbReference type="EMDB" id="EMD-27984"/>
<dbReference type="EMDB" id="EMD-27985"/>
<dbReference type="EMDB" id="EMD-27986"/>
<dbReference type="EMDB" id="EMD-30034"/>
<dbReference type="EMDB" id="EMD-30035"/>
<dbReference type="EMDB" id="EMD-31538"/>
<dbReference type="EMDB" id="EMD-31539"/>
<dbReference type="EMDB" id="EMD-31540"/>
<dbReference type="EMDB" id="EMD-47659"/>
<dbReference type="EMDB" id="EMD-47679"/>
<dbReference type="EMDB" id="EMD-48311"/>
<dbReference type="EMDB" id="EMD-7348"/>
<dbReference type="EMDB" id="EMD-8409"/>
<dbReference type="EMDB" id="EMD-8724"/>
<dbReference type="EMDB" id="EMD-8725"/>
<dbReference type="EMDB" id="EMD-8726"/>
<dbReference type="SMR" id="P23968"/>
<dbReference type="BioGRID" id="36457">
    <property type="interactions" value="69"/>
</dbReference>
<dbReference type="ComplexPortal" id="CPX-1192">
    <property type="entry name" value="Vacuolar proton translocating ATPase complex, Golgi variant"/>
</dbReference>
<dbReference type="ComplexPortal" id="CPX-1193">
    <property type="entry name" value="Vacuolar proton translocating ATPase complex, vacuole variant"/>
</dbReference>
<dbReference type="DIP" id="DIP-4054N"/>
<dbReference type="FunCoup" id="P23968">
    <property type="interactions" value="326"/>
</dbReference>
<dbReference type="IntAct" id="P23968">
    <property type="interactions" value="13"/>
</dbReference>
<dbReference type="MINT" id="P23968"/>
<dbReference type="STRING" id="4932.YHR026W"/>
<dbReference type="TCDB" id="3.A.2.2.3">
    <property type="family name" value="the h+- or na+-translocating f-type, v-type and a-type atpase (f-atpase) superfamily"/>
</dbReference>
<dbReference type="PaxDb" id="4932-YHR026W"/>
<dbReference type="PeptideAtlas" id="P23968"/>
<dbReference type="EnsemblFungi" id="YHR026W_mRNA">
    <property type="protein sequence ID" value="YHR026W"/>
    <property type="gene ID" value="YHR026W"/>
</dbReference>
<dbReference type="GeneID" id="856421"/>
<dbReference type="KEGG" id="sce:YHR026W"/>
<dbReference type="AGR" id="SGD:S000001068"/>
<dbReference type="SGD" id="S000001068">
    <property type="gene designation" value="VMA16"/>
</dbReference>
<dbReference type="VEuPathDB" id="FungiDB:YHR026W"/>
<dbReference type="eggNOG" id="KOG0233">
    <property type="taxonomic scope" value="Eukaryota"/>
</dbReference>
<dbReference type="GeneTree" id="ENSGT00550000075120"/>
<dbReference type="HOGENOM" id="CLU_085752_0_1_1"/>
<dbReference type="InParanoid" id="P23968"/>
<dbReference type="OMA" id="TSPYMWG"/>
<dbReference type="OrthoDB" id="10264021at2759"/>
<dbReference type="BioCyc" id="YEAST:G3O-31086-MONOMER"/>
<dbReference type="Reactome" id="R-SCE-1222556">
    <property type="pathway name" value="ROS and RNS production in phagocytes"/>
</dbReference>
<dbReference type="Reactome" id="R-SCE-77387">
    <property type="pathway name" value="Insulin receptor recycling"/>
</dbReference>
<dbReference type="Reactome" id="R-SCE-917977">
    <property type="pathway name" value="Transferrin endocytosis and recycling"/>
</dbReference>
<dbReference type="Reactome" id="R-SCE-9639288">
    <property type="pathway name" value="Amino acids regulate mTORC1"/>
</dbReference>
<dbReference type="BioGRID-ORCS" id="856421">
    <property type="hits" value="4 hits in 10 CRISPR screens"/>
</dbReference>
<dbReference type="PRO" id="PR:P23968"/>
<dbReference type="Proteomes" id="UP000002311">
    <property type="component" value="Chromosome VIII"/>
</dbReference>
<dbReference type="RNAct" id="P23968">
    <property type="molecule type" value="protein"/>
</dbReference>
<dbReference type="GO" id="GO:0000329">
    <property type="term" value="C:fungal-type vacuole membrane"/>
    <property type="evidence" value="ECO:0000303"/>
    <property type="project" value="ComplexPortal"/>
</dbReference>
<dbReference type="GO" id="GO:0000139">
    <property type="term" value="C:Golgi membrane"/>
    <property type="evidence" value="ECO:0000303"/>
    <property type="project" value="ComplexPortal"/>
</dbReference>
<dbReference type="GO" id="GO:0016020">
    <property type="term" value="C:membrane"/>
    <property type="evidence" value="ECO:0000314"/>
    <property type="project" value="SGD"/>
</dbReference>
<dbReference type="GO" id="GO:0033176">
    <property type="term" value="C:proton-transporting V-type ATPase complex"/>
    <property type="evidence" value="ECO:0000353"/>
    <property type="project" value="ComplexPortal"/>
</dbReference>
<dbReference type="GO" id="GO:0016471">
    <property type="term" value="C:vacuolar proton-transporting V-type ATPase complex"/>
    <property type="evidence" value="ECO:0000314"/>
    <property type="project" value="MGI"/>
</dbReference>
<dbReference type="GO" id="GO:0000220">
    <property type="term" value="C:vacuolar proton-transporting V-type ATPase, V0 domain"/>
    <property type="evidence" value="ECO:0000314"/>
    <property type="project" value="UniProtKB"/>
</dbReference>
<dbReference type="GO" id="GO:0008553">
    <property type="term" value="F:P-type proton-exporting transporter activity"/>
    <property type="evidence" value="ECO:0000314"/>
    <property type="project" value="MGI"/>
</dbReference>
<dbReference type="GO" id="GO:0046961">
    <property type="term" value="F:proton-transporting ATPase activity, rotational mechanism"/>
    <property type="evidence" value="ECO:0000304"/>
    <property type="project" value="SGD"/>
</dbReference>
<dbReference type="GO" id="GO:0048388">
    <property type="term" value="P:endosomal lumen acidification"/>
    <property type="evidence" value="ECO:0000303"/>
    <property type="project" value="ComplexPortal"/>
</dbReference>
<dbReference type="GO" id="GO:0061795">
    <property type="term" value="P:Golgi lumen acidification"/>
    <property type="evidence" value="ECO:0000303"/>
    <property type="project" value="ComplexPortal"/>
</dbReference>
<dbReference type="GO" id="GO:1902600">
    <property type="term" value="P:proton transmembrane transport"/>
    <property type="evidence" value="ECO:0000314"/>
    <property type="project" value="MGI"/>
</dbReference>
<dbReference type="GO" id="GO:0007035">
    <property type="term" value="P:vacuolar acidification"/>
    <property type="evidence" value="ECO:0000315"/>
    <property type="project" value="SGD"/>
</dbReference>
<dbReference type="CDD" id="cd18177">
    <property type="entry name" value="ATP-synt_Vo_c_ATP6F_rpt1"/>
    <property type="match status" value="1"/>
</dbReference>
<dbReference type="CDD" id="cd18178">
    <property type="entry name" value="ATP-synt_Vo_c_ATP6F_rpt2"/>
    <property type="match status" value="1"/>
</dbReference>
<dbReference type="FunFam" id="1.20.120.610:FF:000002">
    <property type="entry name" value="V-type proton ATPase proteolipid subunit"/>
    <property type="match status" value="1"/>
</dbReference>
<dbReference type="Gene3D" id="1.20.120.610">
    <property type="entry name" value="lithium bound rotor ring of v- atpase"/>
    <property type="match status" value="1"/>
</dbReference>
<dbReference type="InterPro" id="IPR002379">
    <property type="entry name" value="ATPase_proteolipid_c-like_dom"/>
</dbReference>
<dbReference type="InterPro" id="IPR000245">
    <property type="entry name" value="ATPase_proteolipid_csu"/>
</dbReference>
<dbReference type="InterPro" id="IPR035921">
    <property type="entry name" value="F/V-ATP_Csub_sf"/>
</dbReference>
<dbReference type="PANTHER" id="PTHR10263">
    <property type="entry name" value="V-TYPE PROTON ATPASE PROTEOLIPID SUBUNIT"/>
    <property type="match status" value="1"/>
</dbReference>
<dbReference type="Pfam" id="PF00137">
    <property type="entry name" value="ATP-synt_C"/>
    <property type="match status" value="2"/>
</dbReference>
<dbReference type="PRINTS" id="PR00122">
    <property type="entry name" value="VACATPASE"/>
</dbReference>
<dbReference type="SUPFAM" id="SSF81333">
    <property type="entry name" value="F1F0 ATP synthase subunit C"/>
    <property type="match status" value="2"/>
</dbReference>
<comment type="function">
    <text evidence="4">Proton-conducting pore forming subunit of the V0 complex of vacuolar(H+)-ATPase (V-ATPase), a multisubunit enzyme composed of a peripheral complex (V1) that hydrolyzes ATP and a membrane integral complex (V0) that translocates protons (PubMed:9030535). V-ATPase is responsible for acidifying and maintaining the pH of intracellular compartments (PubMed:9030535).</text>
</comment>
<comment type="subunit">
    <text evidence="2 3">V-ATPase is a heteromultimeric enzyme composed of a peripheral catalytic V1 complex (components A to H) attached to an integral membrane V0 proton pore complex (components: a, c, c', c'', d, e, f and VOA1) (PubMed:27776355, PubMed:29526695). The decameric c-ring forms the proton-conducting pore, and is composed of eight proteolipid subunits c, one subunit c' and one subunit c'' (PubMed:27776355, PubMed:29526695).</text>
</comment>
<comment type="subcellular location">
    <subcellularLocation>
        <location evidence="4">Vacuole membrane</location>
        <topology evidence="1">Multi-pass membrane protein</topology>
    </subcellularLocation>
</comment>
<comment type="similarity">
    <text evidence="5">Belongs to the V-ATPase proteolipid subunit family.</text>
</comment>
<protein>
    <recommendedName>
        <fullName>V-type proton ATPase subunit c''</fullName>
        <shortName>V-ATPase subunit c''</shortName>
    </recommendedName>
    <alternativeName>
        <fullName>V-ATPase 22 kDa proteolipid subunit</fullName>
    </alternativeName>
    <alternativeName>
        <fullName>Vacuolar proton pump c'' subunit</fullName>
    </alternativeName>
</protein>
<proteinExistence type="evidence at protein level"/>
<reference key="1">
    <citation type="journal article" date="1990" name="Biochem. Biophys. Res. Commun.">
        <title>A yeast protein, homologous to the proteolipid of the chromaffin granule proton-ATPase, is important for cell growth.</title>
        <authorList>
            <person name="Apperson M."/>
            <person name="Jensen R.E."/>
            <person name="Suda K."/>
            <person name="Witte C."/>
            <person name="Yaffe M.P."/>
        </authorList>
    </citation>
    <scope>NUCLEOTIDE SEQUENCE [GENOMIC DNA]</scope>
</reference>
<reference key="2">
    <citation type="journal article" date="1994" name="Science">
        <title>Complete nucleotide sequence of Saccharomyces cerevisiae chromosome VIII.</title>
        <authorList>
            <person name="Johnston M."/>
            <person name="Andrews S."/>
            <person name="Brinkman R."/>
            <person name="Cooper J."/>
            <person name="Ding H."/>
            <person name="Dover J."/>
            <person name="Du Z."/>
            <person name="Favello A."/>
            <person name="Fulton L."/>
            <person name="Gattung S."/>
            <person name="Geisel C."/>
            <person name="Kirsten J."/>
            <person name="Kucaba T."/>
            <person name="Hillier L.W."/>
            <person name="Jier M."/>
            <person name="Johnston L."/>
            <person name="Langston Y."/>
            <person name="Latreille P."/>
            <person name="Louis E.J."/>
            <person name="Macri C."/>
            <person name="Mardis E."/>
            <person name="Menezes S."/>
            <person name="Mouser L."/>
            <person name="Nhan M."/>
            <person name="Rifkin L."/>
            <person name="Riles L."/>
            <person name="St Peter H."/>
            <person name="Trevaskis E."/>
            <person name="Vaughan K."/>
            <person name="Vignati D."/>
            <person name="Wilcox L."/>
            <person name="Wohldman P."/>
            <person name="Waterston R."/>
            <person name="Wilson R."/>
            <person name="Vaudin M."/>
        </authorList>
    </citation>
    <scope>NUCLEOTIDE SEQUENCE [LARGE SCALE GENOMIC DNA]</scope>
    <source>
        <strain>ATCC 204508 / S288c</strain>
    </source>
</reference>
<reference key="3">
    <citation type="journal article" date="2014" name="G3 (Bethesda)">
        <title>The reference genome sequence of Saccharomyces cerevisiae: Then and now.</title>
        <authorList>
            <person name="Engel S.R."/>
            <person name="Dietrich F.S."/>
            <person name="Fisk D.G."/>
            <person name="Binkley G."/>
            <person name="Balakrishnan R."/>
            <person name="Costanzo M.C."/>
            <person name="Dwight S.S."/>
            <person name="Hitz B.C."/>
            <person name="Karra K."/>
            <person name="Nash R.S."/>
            <person name="Weng S."/>
            <person name="Wong E.D."/>
            <person name="Lloyd P."/>
            <person name="Skrzypek M.S."/>
            <person name="Miyasato S.R."/>
            <person name="Simison M."/>
            <person name="Cherry J.M."/>
        </authorList>
    </citation>
    <scope>GENOME REANNOTATION</scope>
    <source>
        <strain>ATCC 204508 / S288c</strain>
    </source>
</reference>
<reference key="4">
    <citation type="journal article" date="2007" name="Genome Res.">
        <title>Approaching a complete repository of sequence-verified protein-encoding clones for Saccharomyces cerevisiae.</title>
        <authorList>
            <person name="Hu Y."/>
            <person name="Rolfs A."/>
            <person name="Bhullar B."/>
            <person name="Murthy T.V.S."/>
            <person name="Zhu C."/>
            <person name="Berger M.F."/>
            <person name="Camargo A.A."/>
            <person name="Kelley F."/>
            <person name="McCarron S."/>
            <person name="Jepson D."/>
            <person name="Richardson A."/>
            <person name="Raphael J."/>
            <person name="Moreira D."/>
            <person name="Taycher E."/>
            <person name="Zuo D."/>
            <person name="Mohr S."/>
            <person name="Kane M.F."/>
            <person name="Williamson J."/>
            <person name="Simpson A.J.G."/>
            <person name="Bulyk M.L."/>
            <person name="Harlow E."/>
            <person name="Marsischky G."/>
            <person name="Kolodner R.D."/>
            <person name="LaBaer J."/>
        </authorList>
    </citation>
    <scope>NUCLEOTIDE SEQUENCE [GENOMIC DNA]</scope>
    <source>
        <strain>ATCC 204508 / S288c</strain>
    </source>
</reference>
<reference key="5">
    <citation type="journal article" date="1997" name="J. Biol. Chem.">
        <title>VMA11 and VMA16 encode second and third proteolipid subunits of the Saccharomyces cerevisiae vacuolar membrane H+-ATPase.</title>
        <authorList>
            <person name="Hirata R."/>
            <person name="Graham L.A."/>
            <person name="Takatsuki A."/>
            <person name="Stevens T.H."/>
            <person name="Anraku Y."/>
        </authorList>
    </citation>
    <scope>FUNCTION</scope>
    <scope>SUBCELLULAR LOCATION</scope>
    <scope>MUTAGENESIS OF GLU-108</scope>
</reference>
<reference key="6">
    <citation type="journal article" date="2006" name="Proc. Natl. Acad. Sci. U.S.A.">
        <title>A global topology map of the Saccharomyces cerevisiae membrane proteome.</title>
        <authorList>
            <person name="Kim H."/>
            <person name="Melen K."/>
            <person name="Oesterberg M."/>
            <person name="von Heijne G."/>
        </authorList>
    </citation>
    <scope>TOPOLOGY [LARGE SCALE ANALYSIS]</scope>
    <source>
        <strain>ATCC 208353 / W303-1A</strain>
    </source>
</reference>
<reference evidence="6" key="7">
    <citation type="journal article" date="2016" name="Nature">
        <title>Atomic model for the membrane-embedded VO motor of a eukaryotic V-ATPase.</title>
        <authorList>
            <person name="Mazhab-Jafari M.T."/>
            <person name="Rohou A."/>
            <person name="Schmidt C."/>
            <person name="Bueler S.A."/>
            <person name="Benlekbir S."/>
            <person name="Robinson C.V."/>
            <person name="Rubinstein J.L."/>
        </authorList>
    </citation>
    <scope>STRUCTURE BY ELECTRON MICROSCOPY (3.90 ANGSTROMS)</scope>
    <scope>IDENTIFICATION IN THE V-ATPASE COMPLEX</scope>
</reference>
<reference evidence="7" key="8">
    <citation type="journal article" date="2018" name="Mol. Cell">
        <title>The 3.5-A cryoEM structure of nanodisc-reconstituted yeast vacuolar ATPase V0 proton channel.</title>
        <authorList>
            <person name="Roh S.H."/>
            <person name="Stam N.J."/>
            <person name="Hryc C.F."/>
            <person name="Couoh-Cardel S."/>
            <person name="Pintilie G."/>
            <person name="Chiu W."/>
            <person name="Wilkens S."/>
        </authorList>
    </citation>
    <scope>STRUCTURE BY ELECTRON MICROSCOPY (3.50 ANGSTROMS)</scope>
    <scope>IDENTIFICATION IN THE V-ATPASE COMPLEX</scope>
</reference>
<feature type="chain" id="PRO_0000071780" description="V-type proton ATPase subunit c''">
    <location>
        <begin position="1"/>
        <end position="213"/>
    </location>
</feature>
<feature type="topological domain" description="Vacuolar" evidence="5">
    <location>
        <begin position="1"/>
        <end position="14"/>
    </location>
</feature>
<feature type="transmembrane region" description="Helical" evidence="1">
    <location>
        <begin position="15"/>
        <end position="35"/>
    </location>
</feature>
<feature type="topological domain" description="Cytoplasmic" evidence="5">
    <location>
        <begin position="36"/>
        <end position="61"/>
    </location>
</feature>
<feature type="transmembrane region" description="Helical" evidence="1">
    <location>
        <begin position="62"/>
        <end position="82"/>
    </location>
</feature>
<feature type="topological domain" description="Vacuolar" evidence="5">
    <location>
        <begin position="83"/>
        <end position="100"/>
    </location>
</feature>
<feature type="transmembrane region" description="Helical" evidence="1">
    <location>
        <begin position="101"/>
        <end position="121"/>
    </location>
</feature>
<feature type="topological domain" description="Cytoplasmic" evidence="5">
    <location>
        <begin position="122"/>
        <end position="144"/>
    </location>
</feature>
<feature type="transmembrane region" description="Helical" evidence="1">
    <location>
        <begin position="145"/>
        <end position="165"/>
    </location>
</feature>
<feature type="topological domain" description="Vacuolar" evidence="5">
    <location>
        <begin position="166"/>
        <end position="183"/>
    </location>
</feature>
<feature type="transmembrane region" description="Helical" evidence="1">
    <location>
        <begin position="184"/>
        <end position="204"/>
    </location>
</feature>
<feature type="topological domain" description="Cytoplasmic" evidence="5">
    <location>
        <begin position="205"/>
        <end position="213"/>
    </location>
</feature>
<feature type="site" description="Essential for proton translocation" evidence="4">
    <location>
        <position position="108"/>
    </location>
</feature>
<feature type="mutagenesis site" description="Partial inactivation." evidence="4">
    <original>E</original>
    <variation>D</variation>
    <location>
        <position position="108"/>
    </location>
</feature>
<feature type="mutagenesis site" description="Inactivation." evidence="4">
    <original>E</original>
    <variation>L</variation>
    <variation>Q</variation>
    <variation>V</variation>
    <location>
        <position position="108"/>
    </location>
</feature>
<feature type="helix" evidence="9">
    <location>
        <begin position="17"/>
        <end position="38"/>
    </location>
</feature>
<feature type="helix" evidence="9">
    <location>
        <begin position="42"/>
        <end position="44"/>
    </location>
</feature>
<feature type="helix" evidence="9">
    <location>
        <begin position="47"/>
        <end position="53"/>
    </location>
</feature>
<feature type="helix" evidence="9">
    <location>
        <begin position="56"/>
        <end position="89"/>
    </location>
</feature>
<feature type="turn" evidence="9">
    <location>
        <begin position="90"/>
        <end position="92"/>
    </location>
</feature>
<feature type="helix" evidence="9">
    <location>
        <begin position="94"/>
        <end position="96"/>
    </location>
</feature>
<feature type="helix" evidence="9">
    <location>
        <begin position="97"/>
        <end position="122"/>
    </location>
</feature>
<feature type="helix" evidence="9">
    <location>
        <begin position="130"/>
        <end position="132"/>
    </location>
</feature>
<feature type="strand" evidence="8">
    <location>
        <begin position="133"/>
        <end position="135"/>
    </location>
</feature>
<feature type="helix" evidence="9">
    <location>
        <begin position="136"/>
        <end position="176"/>
    </location>
</feature>
<feature type="helix" evidence="9">
    <location>
        <begin position="178"/>
        <end position="180"/>
    </location>
</feature>
<feature type="helix" evidence="9">
    <location>
        <begin position="181"/>
        <end position="205"/>
    </location>
</feature>
<accession>P23968</accession>
<accession>D3DKX3</accession>
<name>VATO_YEAST</name>
<organism>
    <name type="scientific">Saccharomyces cerevisiae (strain ATCC 204508 / S288c)</name>
    <name type="common">Baker's yeast</name>
    <dbReference type="NCBI Taxonomy" id="559292"/>
    <lineage>
        <taxon>Eukaryota</taxon>
        <taxon>Fungi</taxon>
        <taxon>Dikarya</taxon>
        <taxon>Ascomycota</taxon>
        <taxon>Saccharomycotina</taxon>
        <taxon>Saccharomycetes</taxon>
        <taxon>Saccharomycetales</taxon>
        <taxon>Saccharomycetaceae</taxon>
        <taxon>Saccharomyces</taxon>
    </lineage>
</organism>